<sequence length="477" mass="51210">MQIQLPMFQNSRVVVVGDVMLDRYWYGATSRISPEAPVPVVKVEQLEDRPGGAANVALNIAALGSAAVILGVTGKDEAAQSLAARMESAGILADFQEHETLPTITKLRVISRHQQLIRMDFEESFAGVPQEQLEKKVAGQLAGAGALVLSDYGKGALRDPQAFIQLARSKQIPVLVDPKGSDFEKYRGATLITPNLSEFEAVVGHCTSEAELVQRGLKLVEELELEALLVTRSEQGMTLLRAGRSELHLPAQAKEVFDVTGAGDTVISVLAAALAAGSEMGQAVALANIAAGIVVGKLGTASVSAPELRRAVQQEQGAGRGAMTVEQLKVALDDARAHGEKIVFTNGCFDIIHAGHVGYLDQARKLGDRLVVAINSDASVSRLKGPARPINPLERRMAVLAGLEAVDWVTWYEDDTPERLLEILKPDILVKGGDYSKEQVVGWEIVEGYGGEVRALDFLDNCSTTAIVEKIRKDQVK</sequence>
<name>HLDE_HAHCH</name>
<protein>
    <recommendedName>
        <fullName evidence="1">Bifunctional protein HldE</fullName>
    </recommendedName>
    <domain>
        <recommendedName>
            <fullName evidence="1">D-beta-D-heptose 7-phosphate kinase</fullName>
            <ecNumber evidence="1">2.7.1.167</ecNumber>
        </recommendedName>
        <alternativeName>
            <fullName evidence="1">D-beta-D-heptose 7-phosphotransferase</fullName>
        </alternativeName>
        <alternativeName>
            <fullName evidence="1">D-glycero-beta-D-manno-heptose-7-phosphate kinase</fullName>
        </alternativeName>
    </domain>
    <domain>
        <recommendedName>
            <fullName evidence="1">D-beta-D-heptose 1-phosphate adenylyltransferase</fullName>
            <ecNumber evidence="1">2.7.7.70</ecNumber>
        </recommendedName>
        <alternativeName>
            <fullName evidence="1">D-glycero-beta-D-manno-heptose 1-phosphate adenylyltransferase</fullName>
        </alternativeName>
    </domain>
</protein>
<organism>
    <name type="scientific">Hahella chejuensis (strain KCTC 2396)</name>
    <dbReference type="NCBI Taxonomy" id="349521"/>
    <lineage>
        <taxon>Bacteria</taxon>
        <taxon>Pseudomonadati</taxon>
        <taxon>Pseudomonadota</taxon>
        <taxon>Gammaproteobacteria</taxon>
        <taxon>Oceanospirillales</taxon>
        <taxon>Hahellaceae</taxon>
        <taxon>Hahella</taxon>
    </lineage>
</organism>
<accession>Q2SN34</accession>
<comment type="function">
    <text evidence="1">Catalyzes the phosphorylation of D-glycero-D-manno-heptose 7-phosphate at the C-1 position to selectively form D-glycero-beta-D-manno-heptose-1,7-bisphosphate.</text>
</comment>
<comment type="function">
    <text evidence="1">Catalyzes the ADP transfer from ATP to D-glycero-beta-D-manno-heptose 1-phosphate, yielding ADP-D-glycero-beta-D-manno-heptose.</text>
</comment>
<comment type="catalytic activity">
    <reaction evidence="1">
        <text>D-glycero-beta-D-manno-heptose 7-phosphate + ATP = D-glycero-beta-D-manno-heptose 1,7-bisphosphate + ADP + H(+)</text>
        <dbReference type="Rhea" id="RHEA:27473"/>
        <dbReference type="ChEBI" id="CHEBI:15378"/>
        <dbReference type="ChEBI" id="CHEBI:30616"/>
        <dbReference type="ChEBI" id="CHEBI:60204"/>
        <dbReference type="ChEBI" id="CHEBI:60208"/>
        <dbReference type="ChEBI" id="CHEBI:456216"/>
        <dbReference type="EC" id="2.7.1.167"/>
    </reaction>
</comment>
<comment type="catalytic activity">
    <reaction evidence="1">
        <text>D-glycero-beta-D-manno-heptose 1-phosphate + ATP + H(+) = ADP-D-glycero-beta-D-manno-heptose + diphosphate</text>
        <dbReference type="Rhea" id="RHEA:27465"/>
        <dbReference type="ChEBI" id="CHEBI:15378"/>
        <dbReference type="ChEBI" id="CHEBI:30616"/>
        <dbReference type="ChEBI" id="CHEBI:33019"/>
        <dbReference type="ChEBI" id="CHEBI:59967"/>
        <dbReference type="ChEBI" id="CHEBI:61593"/>
        <dbReference type="EC" id="2.7.7.70"/>
    </reaction>
</comment>
<comment type="pathway">
    <text evidence="1">Nucleotide-sugar biosynthesis; ADP-L-glycero-beta-D-manno-heptose biosynthesis; ADP-L-glycero-beta-D-manno-heptose from D-glycero-beta-D-manno-heptose 7-phosphate: step 1/4.</text>
</comment>
<comment type="pathway">
    <text evidence="1">Nucleotide-sugar biosynthesis; ADP-L-glycero-beta-D-manno-heptose biosynthesis; ADP-L-glycero-beta-D-manno-heptose from D-glycero-beta-D-manno-heptose 7-phosphate: step 3/4.</text>
</comment>
<comment type="subunit">
    <text evidence="1">Homodimer.</text>
</comment>
<comment type="similarity">
    <text evidence="1">In the N-terminal section; belongs to the carbohydrate kinase PfkB family.</text>
</comment>
<comment type="similarity">
    <text evidence="1">In the C-terminal section; belongs to the cytidylyltransferase family.</text>
</comment>
<reference key="1">
    <citation type="journal article" date="2005" name="Nucleic Acids Res.">
        <title>Genomic blueprint of Hahella chejuensis, a marine microbe producing an algicidal agent.</title>
        <authorList>
            <person name="Jeong H."/>
            <person name="Yim J.H."/>
            <person name="Lee C."/>
            <person name="Choi S.-H."/>
            <person name="Park Y.K."/>
            <person name="Yoon S.H."/>
            <person name="Hur C.-G."/>
            <person name="Kang H.-Y."/>
            <person name="Kim D."/>
            <person name="Lee H.H."/>
            <person name="Park K.H."/>
            <person name="Park S.-H."/>
            <person name="Park H.-S."/>
            <person name="Lee H.K."/>
            <person name="Oh T.K."/>
            <person name="Kim J.F."/>
        </authorList>
    </citation>
    <scope>NUCLEOTIDE SEQUENCE [LARGE SCALE GENOMIC DNA]</scope>
    <source>
        <strain>KCTC 2396</strain>
    </source>
</reference>
<keyword id="KW-0067">ATP-binding</keyword>
<keyword id="KW-0119">Carbohydrate metabolism</keyword>
<keyword id="KW-0418">Kinase</keyword>
<keyword id="KW-0511">Multifunctional enzyme</keyword>
<keyword id="KW-0547">Nucleotide-binding</keyword>
<keyword id="KW-0548">Nucleotidyltransferase</keyword>
<keyword id="KW-1185">Reference proteome</keyword>
<keyword id="KW-0808">Transferase</keyword>
<dbReference type="EC" id="2.7.1.167" evidence="1"/>
<dbReference type="EC" id="2.7.7.70" evidence="1"/>
<dbReference type="EMBL" id="CP000155">
    <property type="protein sequence ID" value="ABC27940.1"/>
    <property type="molecule type" value="Genomic_DNA"/>
</dbReference>
<dbReference type="RefSeq" id="WP_011395015.1">
    <property type="nucleotide sequence ID" value="NC_007645.1"/>
</dbReference>
<dbReference type="SMR" id="Q2SN34"/>
<dbReference type="STRING" id="349521.HCH_01059"/>
<dbReference type="KEGG" id="hch:HCH_01059"/>
<dbReference type="eggNOG" id="COG0615">
    <property type="taxonomic scope" value="Bacteria"/>
</dbReference>
<dbReference type="eggNOG" id="COG2870">
    <property type="taxonomic scope" value="Bacteria"/>
</dbReference>
<dbReference type="HOGENOM" id="CLU_021150_2_1_6"/>
<dbReference type="OrthoDB" id="9802794at2"/>
<dbReference type="UniPathway" id="UPA00356">
    <property type="reaction ID" value="UER00437"/>
</dbReference>
<dbReference type="UniPathway" id="UPA00356">
    <property type="reaction ID" value="UER00439"/>
</dbReference>
<dbReference type="Proteomes" id="UP000000238">
    <property type="component" value="Chromosome"/>
</dbReference>
<dbReference type="GO" id="GO:0005829">
    <property type="term" value="C:cytosol"/>
    <property type="evidence" value="ECO:0007669"/>
    <property type="project" value="TreeGrafter"/>
</dbReference>
<dbReference type="GO" id="GO:0005524">
    <property type="term" value="F:ATP binding"/>
    <property type="evidence" value="ECO:0007669"/>
    <property type="project" value="UniProtKB-UniRule"/>
</dbReference>
<dbReference type="GO" id="GO:0033785">
    <property type="term" value="F:heptose 7-phosphate kinase activity"/>
    <property type="evidence" value="ECO:0007669"/>
    <property type="project" value="UniProtKB-UniRule"/>
</dbReference>
<dbReference type="GO" id="GO:0033786">
    <property type="term" value="F:heptose-1-phosphate adenylyltransferase activity"/>
    <property type="evidence" value="ECO:0007669"/>
    <property type="project" value="UniProtKB-UniRule"/>
</dbReference>
<dbReference type="GO" id="GO:0016773">
    <property type="term" value="F:phosphotransferase activity, alcohol group as acceptor"/>
    <property type="evidence" value="ECO:0007669"/>
    <property type="project" value="InterPro"/>
</dbReference>
<dbReference type="GO" id="GO:0097171">
    <property type="term" value="P:ADP-L-glycero-beta-D-manno-heptose biosynthetic process"/>
    <property type="evidence" value="ECO:0007669"/>
    <property type="project" value="UniProtKB-UniPathway"/>
</dbReference>
<dbReference type="CDD" id="cd01172">
    <property type="entry name" value="RfaE_like"/>
    <property type="match status" value="1"/>
</dbReference>
<dbReference type="FunFam" id="3.40.1190.20:FF:000002">
    <property type="entry name" value="Bifunctional protein HldE"/>
    <property type="match status" value="1"/>
</dbReference>
<dbReference type="FunFam" id="3.40.50.620:FF:000028">
    <property type="entry name" value="Bifunctional protein HldE"/>
    <property type="match status" value="1"/>
</dbReference>
<dbReference type="Gene3D" id="3.40.1190.20">
    <property type="match status" value="1"/>
</dbReference>
<dbReference type="Gene3D" id="3.40.50.620">
    <property type="entry name" value="HUPs"/>
    <property type="match status" value="1"/>
</dbReference>
<dbReference type="HAMAP" id="MF_01603">
    <property type="entry name" value="HldE"/>
    <property type="match status" value="1"/>
</dbReference>
<dbReference type="InterPro" id="IPR023030">
    <property type="entry name" value="Bifunc_HldE"/>
</dbReference>
<dbReference type="InterPro" id="IPR002173">
    <property type="entry name" value="Carboh/pur_kinase_PfkB_CS"/>
</dbReference>
<dbReference type="InterPro" id="IPR004821">
    <property type="entry name" value="Cyt_trans-like"/>
</dbReference>
<dbReference type="InterPro" id="IPR011611">
    <property type="entry name" value="PfkB_dom"/>
</dbReference>
<dbReference type="InterPro" id="IPR011913">
    <property type="entry name" value="RfaE_dom_I"/>
</dbReference>
<dbReference type="InterPro" id="IPR011914">
    <property type="entry name" value="RfaE_dom_II"/>
</dbReference>
<dbReference type="InterPro" id="IPR029056">
    <property type="entry name" value="Ribokinase-like"/>
</dbReference>
<dbReference type="InterPro" id="IPR014729">
    <property type="entry name" value="Rossmann-like_a/b/a_fold"/>
</dbReference>
<dbReference type="NCBIfam" id="TIGR00125">
    <property type="entry name" value="cyt_tran_rel"/>
    <property type="match status" value="1"/>
</dbReference>
<dbReference type="NCBIfam" id="NF008454">
    <property type="entry name" value="PRK11316.1"/>
    <property type="match status" value="1"/>
</dbReference>
<dbReference type="NCBIfam" id="TIGR02198">
    <property type="entry name" value="rfaE_dom_I"/>
    <property type="match status" value="1"/>
</dbReference>
<dbReference type="NCBIfam" id="TIGR02199">
    <property type="entry name" value="rfaE_dom_II"/>
    <property type="match status" value="1"/>
</dbReference>
<dbReference type="PANTHER" id="PTHR46969">
    <property type="entry name" value="BIFUNCTIONAL PROTEIN HLDE"/>
    <property type="match status" value="1"/>
</dbReference>
<dbReference type="PANTHER" id="PTHR46969:SF1">
    <property type="entry name" value="BIFUNCTIONAL PROTEIN HLDE"/>
    <property type="match status" value="1"/>
</dbReference>
<dbReference type="Pfam" id="PF01467">
    <property type="entry name" value="CTP_transf_like"/>
    <property type="match status" value="1"/>
</dbReference>
<dbReference type="Pfam" id="PF00294">
    <property type="entry name" value="PfkB"/>
    <property type="match status" value="1"/>
</dbReference>
<dbReference type="SUPFAM" id="SSF52374">
    <property type="entry name" value="Nucleotidylyl transferase"/>
    <property type="match status" value="1"/>
</dbReference>
<dbReference type="SUPFAM" id="SSF53613">
    <property type="entry name" value="Ribokinase-like"/>
    <property type="match status" value="1"/>
</dbReference>
<dbReference type="PROSITE" id="PS00583">
    <property type="entry name" value="PFKB_KINASES_1"/>
    <property type="match status" value="1"/>
</dbReference>
<feature type="chain" id="PRO_0000255762" description="Bifunctional protein HldE">
    <location>
        <begin position="1"/>
        <end position="477"/>
    </location>
</feature>
<feature type="region of interest" description="Ribokinase">
    <location>
        <begin position="1"/>
        <end position="318"/>
    </location>
</feature>
<feature type="region of interest" description="Cytidylyltransferase">
    <location>
        <begin position="344"/>
        <end position="477"/>
    </location>
</feature>
<feature type="active site" evidence="1">
    <location>
        <position position="264"/>
    </location>
</feature>
<feature type="binding site" evidence="1">
    <location>
        <begin position="195"/>
        <end position="198"/>
    </location>
    <ligand>
        <name>ATP</name>
        <dbReference type="ChEBI" id="CHEBI:30616"/>
    </ligand>
</feature>
<proteinExistence type="inferred from homology"/>
<gene>
    <name evidence="1" type="primary">hldE</name>
    <name type="ordered locus">HCH_01059</name>
</gene>
<evidence type="ECO:0000255" key="1">
    <source>
        <dbReference type="HAMAP-Rule" id="MF_01603"/>
    </source>
</evidence>